<sequence length="127" mass="14478">MSDNEDNFDGDDFDDVEEDEGLDDLENAEEEGQENVEILPSGERPQANQKRITTPYMTKYERARVLGTRALQIAMCAPVMVELEGETDPLLIAMKELKARKIPIIIRRYLPDGSYEDWGVDELIITD</sequence>
<gene>
    <name type="primary">POLR2F</name>
</gene>
<dbReference type="EMBL" id="CR860972">
    <property type="protein sequence ID" value="CAH93074.1"/>
    <property type="molecule type" value="mRNA"/>
</dbReference>
<dbReference type="RefSeq" id="NP_001127626.1">
    <property type="nucleotide sequence ID" value="NM_001134154.1"/>
</dbReference>
<dbReference type="SMR" id="Q5R592"/>
<dbReference type="FunCoup" id="Q5R592">
    <property type="interactions" value="1961"/>
</dbReference>
<dbReference type="STRING" id="9601.ENSPPYP00000013173"/>
<dbReference type="Ensembl" id="ENSPPYT00000060617.1">
    <property type="protein sequence ID" value="ENSPPYP00000028000.1"/>
    <property type="gene ID" value="ENSPPYG00000011809.3"/>
</dbReference>
<dbReference type="GeneID" id="100174705"/>
<dbReference type="KEGG" id="pon:100174705"/>
<dbReference type="CTD" id="5435"/>
<dbReference type="eggNOG" id="KOG3405">
    <property type="taxonomic scope" value="Eukaryota"/>
</dbReference>
<dbReference type="GeneTree" id="ENSGT00390000010415"/>
<dbReference type="HOGENOM" id="CLU_112527_2_0_1"/>
<dbReference type="InParanoid" id="Q5R592"/>
<dbReference type="OMA" id="TYMTKYE"/>
<dbReference type="OrthoDB" id="259769at2759"/>
<dbReference type="TreeFam" id="TF103041"/>
<dbReference type="Proteomes" id="UP000001595">
    <property type="component" value="Chromosome 22"/>
</dbReference>
<dbReference type="GO" id="GO:0005634">
    <property type="term" value="C:nucleus"/>
    <property type="evidence" value="ECO:0000250"/>
    <property type="project" value="UniProtKB"/>
</dbReference>
<dbReference type="GO" id="GO:0005736">
    <property type="term" value="C:RNA polymerase I complex"/>
    <property type="evidence" value="ECO:0007669"/>
    <property type="project" value="TreeGrafter"/>
</dbReference>
<dbReference type="GO" id="GO:0005665">
    <property type="term" value="C:RNA polymerase II, core complex"/>
    <property type="evidence" value="ECO:0000250"/>
    <property type="project" value="UniProtKB"/>
</dbReference>
<dbReference type="GO" id="GO:0005666">
    <property type="term" value="C:RNA polymerase III complex"/>
    <property type="evidence" value="ECO:0007669"/>
    <property type="project" value="TreeGrafter"/>
</dbReference>
<dbReference type="GO" id="GO:0003677">
    <property type="term" value="F:DNA binding"/>
    <property type="evidence" value="ECO:0007669"/>
    <property type="project" value="InterPro"/>
</dbReference>
<dbReference type="GO" id="GO:0003899">
    <property type="term" value="F:DNA-directed RNA polymerase activity"/>
    <property type="evidence" value="ECO:0007669"/>
    <property type="project" value="InterPro"/>
</dbReference>
<dbReference type="GO" id="GO:0006360">
    <property type="term" value="P:transcription by RNA polymerase I"/>
    <property type="evidence" value="ECO:0007669"/>
    <property type="project" value="TreeGrafter"/>
</dbReference>
<dbReference type="GO" id="GO:0006366">
    <property type="term" value="P:transcription by RNA polymerase II"/>
    <property type="evidence" value="ECO:0000250"/>
    <property type="project" value="UniProtKB"/>
</dbReference>
<dbReference type="GO" id="GO:0042797">
    <property type="term" value="P:tRNA transcription by RNA polymerase III"/>
    <property type="evidence" value="ECO:0007669"/>
    <property type="project" value="TreeGrafter"/>
</dbReference>
<dbReference type="FunFam" id="3.90.940.10:FF:000003">
    <property type="entry name" value="DNA-directed RNA polymerases I, II, and III subunit RPABC2"/>
    <property type="match status" value="1"/>
</dbReference>
<dbReference type="Gene3D" id="3.90.940.10">
    <property type="match status" value="1"/>
</dbReference>
<dbReference type="InterPro" id="IPR020708">
    <property type="entry name" value="DNA-dir_RNA_polK_14-18kDa_CS"/>
</dbReference>
<dbReference type="InterPro" id="IPR006110">
    <property type="entry name" value="Pol_omega/Rpo6/RPB6"/>
</dbReference>
<dbReference type="InterPro" id="IPR028363">
    <property type="entry name" value="RPB6"/>
</dbReference>
<dbReference type="InterPro" id="IPR036161">
    <property type="entry name" value="RPB6/omega-like_sf"/>
</dbReference>
<dbReference type="InterPro" id="IPR006111">
    <property type="entry name" value="Rpo6/Rpb6"/>
</dbReference>
<dbReference type="NCBIfam" id="NF002208">
    <property type="entry name" value="PRK01099.1-3"/>
    <property type="match status" value="1"/>
</dbReference>
<dbReference type="PANTHER" id="PTHR47227">
    <property type="entry name" value="DNA-DIRECTED RNA POLYMERASE SUBUNIT K"/>
    <property type="match status" value="1"/>
</dbReference>
<dbReference type="PANTHER" id="PTHR47227:SF5">
    <property type="entry name" value="DNA-DIRECTED RNA POLYMERASES I, II, AND III SUBUNIT RPABC2"/>
    <property type="match status" value="1"/>
</dbReference>
<dbReference type="Pfam" id="PF01192">
    <property type="entry name" value="RNA_pol_Rpb6"/>
    <property type="match status" value="1"/>
</dbReference>
<dbReference type="PIRSF" id="PIRSF500154">
    <property type="entry name" value="RPB6"/>
    <property type="match status" value="1"/>
</dbReference>
<dbReference type="PIRSF" id="PIRSF000778">
    <property type="entry name" value="RpoK/RPB6"/>
    <property type="match status" value="1"/>
</dbReference>
<dbReference type="SMART" id="SM01409">
    <property type="entry name" value="RNA_pol_Rpb6"/>
    <property type="match status" value="1"/>
</dbReference>
<dbReference type="SUPFAM" id="SSF63562">
    <property type="entry name" value="RPB6/omega subunit-like"/>
    <property type="match status" value="1"/>
</dbReference>
<dbReference type="PROSITE" id="PS01111">
    <property type="entry name" value="RNA_POL_K_14KD"/>
    <property type="match status" value="1"/>
</dbReference>
<comment type="function">
    <text evidence="2 3">DNA-dependent RNA polymerase catalyzes the transcription of DNA into RNA using the four ribonucleoside triphosphates as substrates. Common component of RNA polymerases I, II, and III which synthesize ribosomal RNA precursors, mRNA precursors and many functional non-coding RNAs, and small RNAs, such as 5S rRNA and tRNAs, respectively. Pol II is the central component of the basal RNA polymerase II transcription machinery. Pols are composed of mobile elements that move relative to each other. In Pol II, POLR2F/RPABC2 is part of the clamp element and together with parts of POLR2A/RPB1 and POLR2B/RPB2 forms a pocket to which the POLR2D/RPB4-POLR2G/RPB7 subcomplex binds.</text>
</comment>
<comment type="subunit">
    <text evidence="3">Component of the RNA polymerase I (Pol I), RNA polymerase II (Pol II) and RNA polymerase III (Pol III) complexes consisting of at least 13, 12 and 17 subunits, respectively (By similarity). Pol I complex consists of a ten-subunit catalytic core composed of POLR1A/RPA1, POLR1B/RPA2, POLR1C/RPAC1, POLR1D/RPAC2, POLR1H/RPA12, POLR2E/RPABC1, POLR2F/RPABC2, POLR2H/RPABC3, POLR2K/RPABC4 and POLR2L/RPABC5; a mobile stalk subunit POLR1F/RPA43 protruding from the core and additional subunits homologous to general transcription factors POLR1E/RPA49 and POLR1G/RPA34. Part of Pol I pre-initiation complex (PIC), in which Pol I core assembles with RRN3 and promoter-bound UTBF and SL1/TIF-IB complex (By similarity). Pol II complex contains a ten-subunit catalytic core composed of POLR2A/RPB1, POLR2B/RPB2, POLR2C/RPB3, POLR2I/RPB9, POLR2J/RPB11, POLR2E/RPABC1, POLR2F/RPABC2, POLR2H/RPABC3, POLR2K/RPABC4 and POLR2L/RPABC5 and a mobile stalk composed of two subunits POLR2D/RPB4 and POLR2G/RPB7. Part of Pol II(G) complex, in which Pol II core associates with an additional subunit POLR2M; unlike conventional Pol II, Pol II(G) functions as a transcriptional repressor. Part of TBP-based Pol II pre-initiation complex (PIC), in which Pol II core assembles with general transcription factors and other specific initiation factors including GTF2E1, GTF2E2, GTF2F1, GTF2F2, TCEA1, ERCC2, ERCC3, GTF2H2, GTF2H3, GTF2H4, GTF2H5, GTF2A1, GTF2A2, GTF2B and TBP; this large multi-subunit PIC complex mediates DNA unwinding and targets Pol II core to the transcription start site where the first phosphodiester bond forms. Pol III complex consists of a ten-subunit catalytic core composed of POLR3A/RPC1, POLR3B/RPC2, POLR1C/RPAC1, POLR1D/RPAC2, POLR3K/RPC10, POLR2E/RPABC1, POLR2F/RPABC2, POLR2H/RPABC3, POLR2K/RPABC4 and POLR2L/RPABC5; a mobile stalk composed of two subunits POLR3H/RPC8 and CRCP/RPC9, protruding from the core and functioning primarily in transcription initiation; and additional subunits homologous to general transcription factors of the RNA polymerase II machinery, POLR3C/RPC3-POLR3F/RPC6-POLR3G/RPC7 heterotrimer required for transcription initiation and POLR3D/RPC4-POLR3E/RPC5 heterodimer involved in both transcription initiation and termination.</text>
</comment>
<comment type="subcellular location">
    <subcellularLocation>
        <location evidence="3">Nucleus</location>
    </subcellularLocation>
    <subcellularLocation>
        <location evidence="3">Nucleus</location>
        <location evidence="3">Nucleolus</location>
    </subcellularLocation>
</comment>
<comment type="similarity">
    <text evidence="5">Belongs to the archaeal Rpo6/eukaryotic RPB6 RNA polymerase subunit family.</text>
</comment>
<keyword id="KW-0007">Acetylation</keyword>
<keyword id="KW-0240">DNA-directed RNA polymerase</keyword>
<keyword id="KW-0539">Nucleus</keyword>
<keyword id="KW-0597">Phosphoprotein</keyword>
<keyword id="KW-1185">Reference proteome</keyword>
<keyword id="KW-0804">Transcription</keyword>
<accession>Q5R592</accession>
<feature type="initiator methionine" description="Removed" evidence="3">
    <location>
        <position position="1"/>
    </location>
</feature>
<feature type="chain" id="PRO_0000133801" description="DNA-directed RNA polymerases I, II, and III subunit RPABC2">
    <location>
        <begin position="2"/>
        <end position="127"/>
    </location>
</feature>
<feature type="region of interest" description="Disordered" evidence="4">
    <location>
        <begin position="1"/>
        <end position="53"/>
    </location>
</feature>
<feature type="compositionally biased region" description="Acidic residues" evidence="4">
    <location>
        <begin position="1"/>
        <end position="34"/>
    </location>
</feature>
<feature type="modified residue" description="N-acetylserine" evidence="3">
    <location>
        <position position="2"/>
    </location>
</feature>
<feature type="modified residue" description="Phosphoserine; by CK2" evidence="1">
    <location>
        <position position="2"/>
    </location>
</feature>
<reference key="1">
    <citation type="submission" date="2004-11" db="EMBL/GenBank/DDBJ databases">
        <authorList>
            <consortium name="The German cDNA consortium"/>
        </authorList>
    </citation>
    <scope>NUCLEOTIDE SEQUENCE [LARGE SCALE MRNA]</scope>
    <source>
        <tissue>Brain cortex</tissue>
    </source>
</reference>
<protein>
    <recommendedName>
        <fullName>DNA-directed RNA polymerases I, II, and III subunit RPABC2</fullName>
        <shortName>RNA polymerases I, II, and III subunit ABC2</shortName>
    </recommendedName>
    <alternativeName>
        <fullName>DNA-directed RNA polymerase II subunit F</fullName>
    </alternativeName>
    <alternativeName>
        <fullName>RPB6 homolog</fullName>
    </alternativeName>
</protein>
<evidence type="ECO:0000250" key="1">
    <source>
        <dbReference type="UniProtKB" id="O88828"/>
    </source>
</evidence>
<evidence type="ECO:0000250" key="2">
    <source>
        <dbReference type="UniProtKB" id="P20435"/>
    </source>
</evidence>
<evidence type="ECO:0000250" key="3">
    <source>
        <dbReference type="UniProtKB" id="P61218"/>
    </source>
</evidence>
<evidence type="ECO:0000256" key="4">
    <source>
        <dbReference type="SAM" id="MobiDB-lite"/>
    </source>
</evidence>
<evidence type="ECO:0000305" key="5"/>
<name>RPAB2_PONAB</name>
<organism>
    <name type="scientific">Pongo abelii</name>
    <name type="common">Sumatran orangutan</name>
    <name type="synonym">Pongo pygmaeus abelii</name>
    <dbReference type="NCBI Taxonomy" id="9601"/>
    <lineage>
        <taxon>Eukaryota</taxon>
        <taxon>Metazoa</taxon>
        <taxon>Chordata</taxon>
        <taxon>Craniata</taxon>
        <taxon>Vertebrata</taxon>
        <taxon>Euteleostomi</taxon>
        <taxon>Mammalia</taxon>
        <taxon>Eutheria</taxon>
        <taxon>Euarchontoglires</taxon>
        <taxon>Primates</taxon>
        <taxon>Haplorrhini</taxon>
        <taxon>Catarrhini</taxon>
        <taxon>Hominidae</taxon>
        <taxon>Pongo</taxon>
    </lineage>
</organism>
<proteinExistence type="evidence at transcript level"/>